<keyword id="KW-0963">Cytoplasm</keyword>
<keyword id="KW-0520">NAD</keyword>
<keyword id="KW-0560">Oxidoreductase</keyword>
<keyword id="KW-1185">Reference proteome</keyword>
<keyword id="KW-0816">Tricarboxylic acid cycle</keyword>
<gene>
    <name evidence="6" type="primary">MDH3</name>
    <name evidence="8" type="ordered locus">At5g56720</name>
    <name evidence="9" type="ORF">MIK19.17</name>
</gene>
<name>MDHC3_ARATH</name>
<proteinExistence type="evidence at transcript level"/>
<protein>
    <recommendedName>
        <fullName evidence="6">Malate dehydrogenase 3, cytoplasmic</fullName>
        <ecNumber evidence="6">1.1.1.37</ecNumber>
    </recommendedName>
    <alternativeName>
        <fullName evidence="6">Cytosolic NAD-dependent malate dehydrogenase 3</fullName>
        <shortName evidence="5">cNAD-MDH3</shortName>
    </alternativeName>
    <alternativeName>
        <fullName evidence="5">Cytosolic malate dehydrogenase 3</fullName>
        <shortName evidence="6">Cytosolic MDH3</shortName>
    </alternativeName>
</protein>
<reference key="1">
    <citation type="journal article" date="1998" name="DNA Res.">
        <title>Structural analysis of Arabidopsis thaliana chromosome 5. VI. Sequence features of the regions of 1,367,185 bp covered by 19 physically assigned P1 and TAC clones.</title>
        <authorList>
            <person name="Kotani H."/>
            <person name="Nakamura Y."/>
            <person name="Sato S."/>
            <person name="Asamizu E."/>
            <person name="Kaneko T."/>
            <person name="Miyajima N."/>
            <person name="Tabata S."/>
        </authorList>
    </citation>
    <scope>NUCLEOTIDE SEQUENCE [LARGE SCALE GENOMIC DNA]</scope>
    <source>
        <strain>cv. Columbia</strain>
    </source>
</reference>
<reference key="2">
    <citation type="journal article" date="2017" name="Plant J.">
        <title>Araport11: a complete reannotation of the Arabidopsis thaliana reference genome.</title>
        <authorList>
            <person name="Cheng C.Y."/>
            <person name="Krishnakumar V."/>
            <person name="Chan A.P."/>
            <person name="Thibaud-Nissen F."/>
            <person name="Schobel S."/>
            <person name="Town C.D."/>
        </authorList>
    </citation>
    <scope>GENOME REANNOTATION</scope>
    <source>
        <strain>cv. Columbia</strain>
    </source>
</reference>
<reference key="3">
    <citation type="journal article" date="2010" name="Plant Physiol.">
        <title>Mitochondrial malate dehydrogenase lowers leaf respiration and alters photorespiration and plant growth in Arabidopsis.</title>
        <authorList>
            <person name="Tomaz T."/>
            <person name="Bagard M."/>
            <person name="Pracharoenwattana I."/>
            <person name="Linden P."/>
            <person name="Lee C.P."/>
            <person name="Carroll A.J."/>
            <person name="Stroeher E."/>
            <person name="Smith S.M."/>
            <person name="Gardestroem P."/>
            <person name="Millar A.H."/>
        </authorList>
    </citation>
    <scope>FUNCTION</scope>
    <scope>TISSUE SPECIFICITY</scope>
</reference>
<dbReference type="EC" id="1.1.1.37" evidence="6"/>
<dbReference type="EMBL" id="AB013392">
    <property type="protein sequence ID" value="BAB09890.1"/>
    <property type="molecule type" value="Genomic_DNA"/>
</dbReference>
<dbReference type="EMBL" id="CP002688">
    <property type="status" value="NOT_ANNOTATED_CDS"/>
    <property type="molecule type" value="Genomic_DNA"/>
</dbReference>
<dbReference type="SMR" id="Q9FJU0"/>
<dbReference type="FunCoup" id="Q9FJU0">
    <property type="interactions" value="1539"/>
</dbReference>
<dbReference type="STRING" id="3702.Q9FJU0"/>
<dbReference type="PaxDb" id="3702-AT5G56720.1"/>
<dbReference type="Araport" id="AT5G56720"/>
<dbReference type="TAIR" id="AT5G56720">
    <property type="gene designation" value="C-NAD-MDH3"/>
</dbReference>
<dbReference type="eggNOG" id="KOG1496">
    <property type="taxonomic scope" value="Eukaryota"/>
</dbReference>
<dbReference type="HOGENOM" id="CLU_040727_2_0_1"/>
<dbReference type="InParanoid" id="Q9FJU0"/>
<dbReference type="PhylomeDB" id="Q9FJU0"/>
<dbReference type="PRO" id="PR:Q9FJU0"/>
<dbReference type="Proteomes" id="UP000006548">
    <property type="component" value="Chromosome 5"/>
</dbReference>
<dbReference type="ExpressionAtlas" id="Q9FJU0">
    <property type="expression patterns" value="baseline and differential"/>
</dbReference>
<dbReference type="GO" id="GO:0016020">
    <property type="term" value="C:membrane"/>
    <property type="evidence" value="ECO:0007005"/>
    <property type="project" value="TAIR"/>
</dbReference>
<dbReference type="GO" id="GO:0009536">
    <property type="term" value="C:plastid"/>
    <property type="evidence" value="ECO:0007005"/>
    <property type="project" value="TAIR"/>
</dbReference>
<dbReference type="GO" id="GO:0030060">
    <property type="term" value="F:L-malate dehydrogenase (NAD+) activity"/>
    <property type="evidence" value="ECO:0000318"/>
    <property type="project" value="GO_Central"/>
</dbReference>
<dbReference type="GO" id="GO:0006108">
    <property type="term" value="P:malate metabolic process"/>
    <property type="evidence" value="ECO:0000318"/>
    <property type="project" value="GO_Central"/>
</dbReference>
<dbReference type="GO" id="GO:0006734">
    <property type="term" value="P:NADH metabolic process"/>
    <property type="evidence" value="ECO:0000318"/>
    <property type="project" value="GO_Central"/>
</dbReference>
<dbReference type="GO" id="GO:0006107">
    <property type="term" value="P:oxaloacetate metabolic process"/>
    <property type="evidence" value="ECO:0000318"/>
    <property type="project" value="GO_Central"/>
</dbReference>
<dbReference type="GO" id="GO:0006099">
    <property type="term" value="P:tricarboxylic acid cycle"/>
    <property type="evidence" value="ECO:0000318"/>
    <property type="project" value="GO_Central"/>
</dbReference>
<dbReference type="CDD" id="cd01336">
    <property type="entry name" value="MDH_cytoplasmic_cytosolic"/>
    <property type="match status" value="1"/>
</dbReference>
<dbReference type="FunFam" id="3.40.50.720:FF:000010">
    <property type="entry name" value="Malate dehydrogenase"/>
    <property type="match status" value="1"/>
</dbReference>
<dbReference type="FunFam" id="3.90.110.10:FF:000002">
    <property type="entry name" value="Malate dehydrogenase"/>
    <property type="match status" value="1"/>
</dbReference>
<dbReference type="Gene3D" id="3.90.110.10">
    <property type="entry name" value="Lactate dehydrogenase/glycoside hydrolase, family 4, C-terminal"/>
    <property type="match status" value="1"/>
</dbReference>
<dbReference type="Gene3D" id="3.40.50.720">
    <property type="entry name" value="NAD(P)-binding Rossmann-like Domain"/>
    <property type="match status" value="1"/>
</dbReference>
<dbReference type="InterPro" id="IPR001557">
    <property type="entry name" value="L-lactate/malate_DH"/>
</dbReference>
<dbReference type="InterPro" id="IPR022383">
    <property type="entry name" value="Lactate/malate_DH_C"/>
</dbReference>
<dbReference type="InterPro" id="IPR001236">
    <property type="entry name" value="Lactate/malate_DH_N"/>
</dbReference>
<dbReference type="InterPro" id="IPR015955">
    <property type="entry name" value="Lactate_DH/Glyco_Ohase_4_C"/>
</dbReference>
<dbReference type="InterPro" id="IPR001252">
    <property type="entry name" value="Malate_DH_AS"/>
</dbReference>
<dbReference type="InterPro" id="IPR011274">
    <property type="entry name" value="Malate_DH_NAD-dep_euk"/>
</dbReference>
<dbReference type="InterPro" id="IPR010945">
    <property type="entry name" value="Malate_DH_type2"/>
</dbReference>
<dbReference type="InterPro" id="IPR036291">
    <property type="entry name" value="NAD(P)-bd_dom_sf"/>
</dbReference>
<dbReference type="NCBIfam" id="TIGR01759">
    <property type="entry name" value="MalateDH-SF1"/>
    <property type="match status" value="1"/>
</dbReference>
<dbReference type="NCBIfam" id="TIGR01758">
    <property type="entry name" value="MDH_euk_cyt"/>
    <property type="match status" value="1"/>
</dbReference>
<dbReference type="NCBIfam" id="NF003916">
    <property type="entry name" value="PRK05442.1"/>
    <property type="match status" value="1"/>
</dbReference>
<dbReference type="PANTHER" id="PTHR23382">
    <property type="entry name" value="MALATE DEHYDROGENASE"/>
    <property type="match status" value="1"/>
</dbReference>
<dbReference type="Pfam" id="PF02866">
    <property type="entry name" value="Ldh_1_C"/>
    <property type="match status" value="1"/>
</dbReference>
<dbReference type="Pfam" id="PF00056">
    <property type="entry name" value="Ldh_1_N"/>
    <property type="match status" value="1"/>
</dbReference>
<dbReference type="PIRSF" id="PIRSF000102">
    <property type="entry name" value="Lac_mal_DH"/>
    <property type="match status" value="1"/>
</dbReference>
<dbReference type="SUPFAM" id="SSF56327">
    <property type="entry name" value="LDH C-terminal domain-like"/>
    <property type="match status" value="1"/>
</dbReference>
<dbReference type="SUPFAM" id="SSF51735">
    <property type="entry name" value="NAD(P)-binding Rossmann-fold domains"/>
    <property type="match status" value="1"/>
</dbReference>
<dbReference type="PROSITE" id="PS00068">
    <property type="entry name" value="MDH"/>
    <property type="match status" value="1"/>
</dbReference>
<accession>Q9FJU0</accession>
<feature type="chain" id="PRO_0000438326" description="Malate dehydrogenase 3, cytoplasmic">
    <location>
        <begin position="1"/>
        <end position="339"/>
    </location>
</feature>
<feature type="active site" description="Proton acceptor" evidence="2">
    <location>
        <position position="194"/>
    </location>
</feature>
<feature type="binding site" evidence="3">
    <location>
        <begin position="22"/>
        <end position="23"/>
    </location>
    <ligand>
        <name>NAD(+)</name>
        <dbReference type="ChEBI" id="CHEBI:57540"/>
    </ligand>
</feature>
<feature type="binding site" evidence="3">
    <location>
        <position position="49"/>
    </location>
    <ligand>
        <name>NAD(+)</name>
        <dbReference type="ChEBI" id="CHEBI:57540"/>
    </ligand>
</feature>
<feature type="binding site" evidence="3">
    <location>
        <position position="96"/>
    </location>
    <ligand>
        <name>NAD(+)</name>
        <dbReference type="ChEBI" id="CHEBI:57540"/>
    </ligand>
</feature>
<feature type="binding site" evidence="3">
    <location>
        <position position="105"/>
    </location>
    <ligand>
        <name>oxaloacetate</name>
        <dbReference type="ChEBI" id="CHEBI:16452"/>
    </ligand>
</feature>
<feature type="binding site" evidence="3">
    <location>
        <position position="119"/>
    </location>
    <ligand>
        <name>NAD(+)</name>
        <dbReference type="ChEBI" id="CHEBI:57540"/>
    </ligand>
</feature>
<feature type="binding site" evidence="3">
    <location>
        <position position="138"/>
    </location>
    <ligand>
        <name>NAD(+)</name>
        <dbReference type="ChEBI" id="CHEBI:57540"/>
    </ligand>
</feature>
<feature type="binding site" evidence="3">
    <location>
        <position position="138"/>
    </location>
    <ligand>
        <name>oxaloacetate</name>
        <dbReference type="ChEBI" id="CHEBI:16452"/>
    </ligand>
</feature>
<feature type="binding site" evidence="3">
    <location>
        <position position="169"/>
    </location>
    <ligand>
        <name>oxaloacetate</name>
        <dbReference type="ChEBI" id="CHEBI:16452"/>
    </ligand>
</feature>
<feature type="binding site" evidence="3">
    <location>
        <position position="194"/>
    </location>
    <ligand>
        <name>oxaloacetate</name>
        <dbReference type="ChEBI" id="CHEBI:16452"/>
    </ligand>
</feature>
<feature type="binding site" evidence="3">
    <location>
        <position position="249"/>
    </location>
    <ligand>
        <name>oxaloacetate</name>
        <dbReference type="ChEBI" id="CHEBI:16452"/>
    </ligand>
</feature>
<comment type="function">
    <text evidence="7">Catalyzes a reversible NAD-dependent dehydrogenase reaction involved in central metabolism and redox homeostasis between organelle compartments.</text>
</comment>
<comment type="catalytic activity">
    <reaction evidence="6">
        <text>(S)-malate + NAD(+) = oxaloacetate + NADH + H(+)</text>
        <dbReference type="Rhea" id="RHEA:21432"/>
        <dbReference type="ChEBI" id="CHEBI:15378"/>
        <dbReference type="ChEBI" id="CHEBI:15589"/>
        <dbReference type="ChEBI" id="CHEBI:16452"/>
        <dbReference type="ChEBI" id="CHEBI:57540"/>
        <dbReference type="ChEBI" id="CHEBI:57945"/>
        <dbReference type="EC" id="1.1.1.37"/>
    </reaction>
</comment>
<comment type="subcellular location">
    <subcellularLocation>
        <location evidence="1">Cytoplasm</location>
    </subcellularLocation>
</comment>
<comment type="tissue specificity">
    <text evidence="4">Expressed in rosette leaves at low levels.</text>
</comment>
<comment type="similarity">
    <text evidence="6">Belongs to the LDH/MDH superfamily. MDH type 2 family.</text>
</comment>
<organism>
    <name type="scientific">Arabidopsis thaliana</name>
    <name type="common">Mouse-ear cress</name>
    <dbReference type="NCBI Taxonomy" id="3702"/>
    <lineage>
        <taxon>Eukaryota</taxon>
        <taxon>Viridiplantae</taxon>
        <taxon>Streptophyta</taxon>
        <taxon>Embryophyta</taxon>
        <taxon>Tracheophyta</taxon>
        <taxon>Spermatophyta</taxon>
        <taxon>Magnoliopsida</taxon>
        <taxon>eudicotyledons</taxon>
        <taxon>Gunneridae</taxon>
        <taxon>Pentapetalae</taxon>
        <taxon>rosids</taxon>
        <taxon>malvids</taxon>
        <taxon>Brassicales</taxon>
        <taxon>Brassicaceae</taxon>
        <taxon>Camelineae</taxon>
        <taxon>Arabidopsis</taxon>
    </lineage>
</organism>
<sequence>MCNLLNIEKDPIRVLITGAAGNIGYAIAPMIARGIMLGPDQPMILHLLDIEPASSSLEAVKMELQDSAFPLLKGVIATTNVVEACKDVNIVIMIGGFPRIAGMERKDVMSKNVVIYKAQASALERYASDDCKVLVVANPANTNALILKEFAPSIPEENITCLTRLDHNRALAQLADKLSVPVSSVKNVIVWGNHSSTQYPDTNHATVSTKTGDRPLKELVTDHNWLKNEFIVEVQQRGAAVLRARKQSSAFSAAGAACDHIRDWFLGTPKGTWVSMGVCSDGSYGIPPGLVYSFPVICEKGSWKIVQGLSIDEFSREKMDDSARELAEEKDLAYSCLNV</sequence>
<evidence type="ECO:0000250" key="1"/>
<evidence type="ECO:0000250" key="2">
    <source>
        <dbReference type="UniProtKB" id="P11708"/>
    </source>
</evidence>
<evidence type="ECO:0000250" key="3">
    <source>
        <dbReference type="UniProtKB" id="P93819"/>
    </source>
</evidence>
<evidence type="ECO:0000269" key="4">
    <source>
    </source>
</evidence>
<evidence type="ECO:0000303" key="5">
    <source>
    </source>
</evidence>
<evidence type="ECO:0000305" key="6"/>
<evidence type="ECO:0000305" key="7">
    <source>
    </source>
</evidence>
<evidence type="ECO:0000312" key="8">
    <source>
        <dbReference type="Araport" id="AT5G56720"/>
    </source>
</evidence>
<evidence type="ECO:0000312" key="9">
    <source>
        <dbReference type="EMBL" id="BAB09890.1"/>
    </source>
</evidence>